<reference key="1">
    <citation type="journal article" date="2006" name="Proc. Natl. Acad. Sci. U.S.A.">
        <title>The partitioned Rhizobium etli genome: genetic and metabolic redundancy in seven interacting replicons.</title>
        <authorList>
            <person name="Gonzalez V."/>
            <person name="Santamaria R.I."/>
            <person name="Bustos P."/>
            <person name="Hernandez-Gonzalez I."/>
            <person name="Medrano-Soto A."/>
            <person name="Moreno-Hagelsieb G."/>
            <person name="Janga S.C."/>
            <person name="Ramirez M.A."/>
            <person name="Jimenez-Jacinto V."/>
            <person name="Collado-Vides J."/>
            <person name="Davila G."/>
        </authorList>
    </citation>
    <scope>NUCLEOTIDE SEQUENCE [LARGE SCALE GENOMIC DNA]</scope>
    <source>
        <strain>ATCC 51251 / DSM 11541 / JCM 21823 / NBRC 15573 / CFN 42</strain>
    </source>
</reference>
<sequence length="256" mass="28559">MKPLELDVFLCRTDNFGVLVHDPETGFTAAIDAPEEAPILEAATRRGWKITHIFTTHHHTDHVAANLALKEQFGCEIIGPINEAIAIPGLDRTMADGDSFLFGDHTVKVIETPGHTAGHICYHFVDDKLLFAADTLFALGCGRLFERPAADMWHSLQKLAVLPDETAVYFGHEYTLSNARFALTVDPDNERLKSRAAEIEALRAEGKFTVPTTLGLEKETNPFLRAADPAIRRHLIMEGKTNEEVFAEIRKRKDNF</sequence>
<feature type="chain" id="PRO_0000309685" description="Hydroxyacylglutathione hydrolase">
    <location>
        <begin position="1"/>
        <end position="256"/>
    </location>
</feature>
<feature type="binding site" evidence="1">
    <location>
        <position position="57"/>
    </location>
    <ligand>
        <name>Zn(2+)</name>
        <dbReference type="ChEBI" id="CHEBI:29105"/>
        <label>1</label>
    </ligand>
</feature>
<feature type="binding site" evidence="1">
    <location>
        <position position="59"/>
    </location>
    <ligand>
        <name>Zn(2+)</name>
        <dbReference type="ChEBI" id="CHEBI:29105"/>
        <label>1</label>
    </ligand>
</feature>
<feature type="binding site" evidence="1">
    <location>
        <position position="61"/>
    </location>
    <ligand>
        <name>Zn(2+)</name>
        <dbReference type="ChEBI" id="CHEBI:29105"/>
        <label>2</label>
    </ligand>
</feature>
<feature type="binding site" evidence="1">
    <location>
        <position position="62"/>
    </location>
    <ligand>
        <name>Zn(2+)</name>
        <dbReference type="ChEBI" id="CHEBI:29105"/>
        <label>2</label>
    </ligand>
</feature>
<feature type="binding site" evidence="1">
    <location>
        <position position="115"/>
    </location>
    <ligand>
        <name>Zn(2+)</name>
        <dbReference type="ChEBI" id="CHEBI:29105"/>
        <label>1</label>
    </ligand>
</feature>
<feature type="binding site" evidence="1">
    <location>
        <position position="134"/>
    </location>
    <ligand>
        <name>Zn(2+)</name>
        <dbReference type="ChEBI" id="CHEBI:29105"/>
        <label>1</label>
    </ligand>
</feature>
<feature type="binding site" evidence="1">
    <location>
        <position position="134"/>
    </location>
    <ligand>
        <name>Zn(2+)</name>
        <dbReference type="ChEBI" id="CHEBI:29105"/>
        <label>2</label>
    </ligand>
</feature>
<feature type="binding site" evidence="1">
    <location>
        <position position="172"/>
    </location>
    <ligand>
        <name>Zn(2+)</name>
        <dbReference type="ChEBI" id="CHEBI:29105"/>
        <label>2</label>
    </ligand>
</feature>
<comment type="function">
    <text evidence="1">Thiolesterase that catalyzes the hydrolysis of S-D-lactoyl-glutathione to form glutathione and D-lactic acid.</text>
</comment>
<comment type="catalytic activity">
    <reaction evidence="1">
        <text>an S-(2-hydroxyacyl)glutathione + H2O = a 2-hydroxy carboxylate + glutathione + H(+)</text>
        <dbReference type="Rhea" id="RHEA:21864"/>
        <dbReference type="ChEBI" id="CHEBI:15377"/>
        <dbReference type="ChEBI" id="CHEBI:15378"/>
        <dbReference type="ChEBI" id="CHEBI:57925"/>
        <dbReference type="ChEBI" id="CHEBI:58896"/>
        <dbReference type="ChEBI" id="CHEBI:71261"/>
        <dbReference type="EC" id="3.1.2.6"/>
    </reaction>
</comment>
<comment type="cofactor">
    <cofactor evidence="1">
        <name>Zn(2+)</name>
        <dbReference type="ChEBI" id="CHEBI:29105"/>
    </cofactor>
    <text evidence="1">Binds 2 Zn(2+) ions per subunit.</text>
</comment>
<comment type="pathway">
    <text evidence="1">Secondary metabolite metabolism; methylglyoxal degradation; (R)-lactate from methylglyoxal: step 2/2.</text>
</comment>
<comment type="subunit">
    <text evidence="1">Monomer.</text>
</comment>
<comment type="similarity">
    <text evidence="1">Belongs to the metallo-beta-lactamase superfamily. Glyoxalase II family.</text>
</comment>
<proteinExistence type="inferred from homology"/>
<organism>
    <name type="scientific">Rhizobium etli (strain ATCC 51251 / DSM 11541 / JCM 21823 / NBRC 15573 / CFN 42)</name>
    <dbReference type="NCBI Taxonomy" id="347834"/>
    <lineage>
        <taxon>Bacteria</taxon>
        <taxon>Pseudomonadati</taxon>
        <taxon>Pseudomonadota</taxon>
        <taxon>Alphaproteobacteria</taxon>
        <taxon>Hyphomicrobiales</taxon>
        <taxon>Rhizobiaceae</taxon>
        <taxon>Rhizobium/Agrobacterium group</taxon>
        <taxon>Rhizobium</taxon>
    </lineage>
</organism>
<keyword id="KW-0378">Hydrolase</keyword>
<keyword id="KW-0479">Metal-binding</keyword>
<keyword id="KW-1185">Reference proteome</keyword>
<keyword id="KW-0862">Zinc</keyword>
<name>GLO2_RHIEC</name>
<accession>Q2K3M6</accession>
<evidence type="ECO:0000255" key="1">
    <source>
        <dbReference type="HAMAP-Rule" id="MF_01374"/>
    </source>
</evidence>
<dbReference type="EC" id="3.1.2.6" evidence="1"/>
<dbReference type="EMBL" id="CP000133">
    <property type="protein sequence ID" value="ABC92560.1"/>
    <property type="molecule type" value="Genomic_DNA"/>
</dbReference>
<dbReference type="RefSeq" id="WP_011427011.1">
    <property type="nucleotide sequence ID" value="NC_007761.1"/>
</dbReference>
<dbReference type="SMR" id="Q2K3M6"/>
<dbReference type="KEGG" id="ret:RHE_CH03812"/>
<dbReference type="eggNOG" id="COG0491">
    <property type="taxonomic scope" value="Bacteria"/>
</dbReference>
<dbReference type="HOGENOM" id="CLU_030571_4_1_5"/>
<dbReference type="OrthoDB" id="9802248at2"/>
<dbReference type="UniPathway" id="UPA00619">
    <property type="reaction ID" value="UER00676"/>
</dbReference>
<dbReference type="Proteomes" id="UP000001936">
    <property type="component" value="Chromosome"/>
</dbReference>
<dbReference type="GO" id="GO:0004416">
    <property type="term" value="F:hydroxyacylglutathione hydrolase activity"/>
    <property type="evidence" value="ECO:0007669"/>
    <property type="project" value="UniProtKB-UniRule"/>
</dbReference>
<dbReference type="GO" id="GO:0046872">
    <property type="term" value="F:metal ion binding"/>
    <property type="evidence" value="ECO:0007669"/>
    <property type="project" value="UniProtKB-KW"/>
</dbReference>
<dbReference type="GO" id="GO:0019243">
    <property type="term" value="P:methylglyoxal catabolic process to D-lactate via S-lactoyl-glutathione"/>
    <property type="evidence" value="ECO:0007669"/>
    <property type="project" value="InterPro"/>
</dbReference>
<dbReference type="CDD" id="cd07723">
    <property type="entry name" value="hydroxyacylglutathione_hydrolase_MBL-fold"/>
    <property type="match status" value="1"/>
</dbReference>
<dbReference type="Gene3D" id="3.60.15.10">
    <property type="entry name" value="Ribonuclease Z/Hydroxyacylglutathione hydrolase-like"/>
    <property type="match status" value="1"/>
</dbReference>
<dbReference type="HAMAP" id="MF_01374">
    <property type="entry name" value="Glyoxalase_2"/>
    <property type="match status" value="1"/>
</dbReference>
<dbReference type="InterPro" id="IPR035680">
    <property type="entry name" value="Clx_II_MBL"/>
</dbReference>
<dbReference type="InterPro" id="IPR050110">
    <property type="entry name" value="Glyoxalase_II_hydrolase"/>
</dbReference>
<dbReference type="InterPro" id="IPR032282">
    <property type="entry name" value="HAGH_C"/>
</dbReference>
<dbReference type="InterPro" id="IPR017782">
    <property type="entry name" value="Hydroxyacylglutathione_Hdrlase"/>
</dbReference>
<dbReference type="InterPro" id="IPR001279">
    <property type="entry name" value="Metallo-B-lactamas"/>
</dbReference>
<dbReference type="InterPro" id="IPR036866">
    <property type="entry name" value="RibonucZ/Hydroxyglut_hydro"/>
</dbReference>
<dbReference type="NCBIfam" id="TIGR03413">
    <property type="entry name" value="GSH_gloB"/>
    <property type="match status" value="1"/>
</dbReference>
<dbReference type="PANTHER" id="PTHR43705">
    <property type="entry name" value="HYDROXYACYLGLUTATHIONE HYDROLASE"/>
    <property type="match status" value="1"/>
</dbReference>
<dbReference type="PANTHER" id="PTHR43705:SF1">
    <property type="entry name" value="HYDROXYACYLGLUTATHIONE HYDROLASE GLOB"/>
    <property type="match status" value="1"/>
</dbReference>
<dbReference type="Pfam" id="PF16123">
    <property type="entry name" value="HAGH_C"/>
    <property type="match status" value="1"/>
</dbReference>
<dbReference type="Pfam" id="PF00753">
    <property type="entry name" value="Lactamase_B"/>
    <property type="match status" value="1"/>
</dbReference>
<dbReference type="PIRSF" id="PIRSF005457">
    <property type="entry name" value="Glx"/>
    <property type="match status" value="1"/>
</dbReference>
<dbReference type="SMART" id="SM00849">
    <property type="entry name" value="Lactamase_B"/>
    <property type="match status" value="1"/>
</dbReference>
<dbReference type="SUPFAM" id="SSF56281">
    <property type="entry name" value="Metallo-hydrolase/oxidoreductase"/>
    <property type="match status" value="1"/>
</dbReference>
<gene>
    <name evidence="1" type="primary">gloB</name>
    <name type="ordered locus">RHE_CH03812</name>
</gene>
<protein>
    <recommendedName>
        <fullName evidence="1">Hydroxyacylglutathione hydrolase</fullName>
        <ecNumber evidence="1">3.1.2.6</ecNumber>
    </recommendedName>
    <alternativeName>
        <fullName evidence="1">Glyoxalase II</fullName>
        <shortName evidence="1">Glx II</shortName>
    </alternativeName>
</protein>